<feature type="chain" id="PRO_0000217192" description="Rhoptry antigen protein">
    <location>
        <begin position="1" status="less than"/>
        <end position="134"/>
    </location>
</feature>
<feature type="region of interest" description="Disordered" evidence="1">
    <location>
        <begin position="21"/>
        <end position="82"/>
    </location>
</feature>
<feature type="region of interest" description="Disordered" evidence="1">
    <location>
        <begin position="96"/>
        <end position="134"/>
    </location>
</feature>
<feature type="compositionally biased region" description="Polar residues" evidence="1">
    <location>
        <begin position="29"/>
        <end position="38"/>
    </location>
</feature>
<feature type="compositionally biased region" description="Low complexity" evidence="1">
    <location>
        <begin position="39"/>
        <end position="54"/>
    </location>
</feature>
<feature type="compositionally biased region" description="Basic and acidic residues" evidence="1">
    <location>
        <begin position="57"/>
        <end position="69"/>
    </location>
</feature>
<feature type="compositionally biased region" description="Basic residues" evidence="1">
    <location>
        <begin position="102"/>
        <end position="113"/>
    </location>
</feature>
<feature type="compositionally biased region" description="Basic and acidic residues" evidence="1">
    <location>
        <begin position="114"/>
        <end position="126"/>
    </location>
</feature>
<feature type="non-terminal residue">
    <location>
        <position position="1"/>
    </location>
</feature>
<keyword id="KW-0461">Malaria</keyword>
<accession>P11459</accession>
<name>RHOA_PLAFA</name>
<dbReference type="EMBL" id="M17530">
    <property type="protein sequence ID" value="AAA29752.1"/>
    <property type="molecule type" value="mRNA"/>
</dbReference>
<dbReference type="PIR" id="A45554">
    <property type="entry name" value="A45554"/>
</dbReference>
<dbReference type="VEuPathDB" id="PlasmoDB:PF3D7_0905400"/>
<dbReference type="VEuPathDB" id="PlasmoDB:Pf7G8-2_000253500"/>
<dbReference type="VEuPathDB" id="PlasmoDB:Pf7G8_090010300"/>
<dbReference type="VEuPathDB" id="PlasmoDB:PfCD01_090009800"/>
<dbReference type="VEuPathDB" id="PlasmoDB:PfDd2_090010700"/>
<dbReference type="VEuPathDB" id="PlasmoDB:PfGA01_090009800"/>
<dbReference type="VEuPathDB" id="PlasmoDB:PfGB4_090010400"/>
<dbReference type="VEuPathDB" id="PlasmoDB:PfGN01_090010300"/>
<dbReference type="VEuPathDB" id="PlasmoDB:PfHB3_090010100"/>
<dbReference type="VEuPathDB" id="PlasmoDB:PfIT_090010100"/>
<dbReference type="VEuPathDB" id="PlasmoDB:PfKE01_090009800"/>
<dbReference type="VEuPathDB" id="PlasmoDB:PfKH01_090009800"/>
<dbReference type="VEuPathDB" id="PlasmoDB:PfKH02_090010200"/>
<dbReference type="VEuPathDB" id="PlasmoDB:PfML01_090009900"/>
<dbReference type="VEuPathDB" id="PlasmoDB:PfNF135_090009100"/>
<dbReference type="VEuPathDB" id="PlasmoDB:PfNF166_090009500"/>
<dbReference type="VEuPathDB" id="PlasmoDB:PfNF54_090010600"/>
<dbReference type="VEuPathDB" id="PlasmoDB:PfSD01_090010500"/>
<dbReference type="VEuPathDB" id="PlasmoDB:PfSN01_090010100"/>
<dbReference type="VEuPathDB" id="PlasmoDB:PfTG01_090009800"/>
<organism>
    <name type="scientific">Plasmodium falciparum</name>
    <dbReference type="NCBI Taxonomy" id="5833"/>
    <lineage>
        <taxon>Eukaryota</taxon>
        <taxon>Sar</taxon>
        <taxon>Alveolata</taxon>
        <taxon>Apicomplexa</taxon>
        <taxon>Aconoidasida</taxon>
        <taxon>Haemosporida</taxon>
        <taxon>Plasmodiidae</taxon>
        <taxon>Plasmodium</taxon>
        <taxon>Plasmodium (Laverania)</taxon>
    </lineage>
</organism>
<reference key="1">
    <citation type="journal article" date="1987" name="Mol. Biochem. Parasitol.">
        <title>A cDNA clone expressing a rhoptry protein of Plasmodium falciparum.</title>
        <authorList>
            <person name="Coppel R.L."/>
            <person name="Bianco A.E."/>
            <person name="Culvenor J.G."/>
            <person name="Crewther P.E."/>
            <person name="Brown G.V."/>
            <person name="Anders R.F."/>
            <person name="Kemp D.J."/>
        </authorList>
    </citation>
    <scope>NUCLEOTIDE SEQUENCE [MRNA]</scope>
</reference>
<proteinExistence type="evidence at transcript level"/>
<protein>
    <recommendedName>
        <fullName>Rhoptry antigen protein</fullName>
    </recommendedName>
</protein>
<sequence>VDILEEKTKDQDLEIELYKYMGPLKEQSKSTSAASTSDELSGSEGPSTESTSTGNQGEDKTTDNTYKEMEELEEAEGTSNLKKGLEFYKSSLKLDQLDKEKPKKKKSKRKKKRDSSSDRILLEESKTFTSENEL</sequence>
<evidence type="ECO:0000256" key="1">
    <source>
        <dbReference type="SAM" id="MobiDB-lite"/>
    </source>
</evidence>